<feature type="chain" id="PRO_1000135185" description="Putative transport protein YbjL">
    <location>
        <begin position="1"/>
        <end position="561"/>
    </location>
</feature>
<feature type="transmembrane region" description="Helical" evidence="1">
    <location>
        <begin position="8"/>
        <end position="28"/>
    </location>
</feature>
<feature type="transmembrane region" description="Helical" evidence="1">
    <location>
        <begin position="32"/>
        <end position="52"/>
    </location>
</feature>
<feature type="transmembrane region" description="Helical" evidence="1">
    <location>
        <begin position="66"/>
        <end position="86"/>
    </location>
</feature>
<feature type="transmembrane region" description="Helical" evidence="1">
    <location>
        <begin position="94"/>
        <end position="114"/>
    </location>
</feature>
<feature type="transmembrane region" description="Helical" evidence="1">
    <location>
        <begin position="158"/>
        <end position="178"/>
    </location>
</feature>
<feature type="transmembrane region" description="Helical" evidence="1">
    <location>
        <begin position="383"/>
        <end position="403"/>
    </location>
</feature>
<feature type="transmembrane region" description="Helical" evidence="1">
    <location>
        <begin position="406"/>
        <end position="426"/>
    </location>
</feature>
<feature type="transmembrane region" description="Helical" evidence="1">
    <location>
        <begin position="451"/>
        <end position="471"/>
    </location>
</feature>
<feature type="transmembrane region" description="Helical" evidence="1">
    <location>
        <begin position="475"/>
        <end position="495"/>
    </location>
</feature>
<feature type="transmembrane region" description="Helical" evidence="1">
    <location>
        <begin position="540"/>
        <end position="560"/>
    </location>
</feature>
<feature type="domain" description="RCK C-terminal 1" evidence="1">
    <location>
        <begin position="200"/>
        <end position="288"/>
    </location>
</feature>
<feature type="domain" description="RCK C-terminal 2" evidence="1">
    <location>
        <begin position="292"/>
        <end position="373"/>
    </location>
</feature>
<name>YBJL_ECOSM</name>
<proteinExistence type="inferred from homology"/>
<accession>B1LMZ9</accession>
<evidence type="ECO:0000255" key="1">
    <source>
        <dbReference type="HAMAP-Rule" id="MF_01015"/>
    </source>
</evidence>
<protein>
    <recommendedName>
        <fullName evidence="1">Putative transport protein YbjL</fullName>
    </recommendedName>
</protein>
<dbReference type="EMBL" id="CP000970">
    <property type="protein sequence ID" value="ACB19027.1"/>
    <property type="molecule type" value="Genomic_DNA"/>
</dbReference>
<dbReference type="RefSeq" id="WP_001024876.1">
    <property type="nucleotide sequence ID" value="NC_010498.1"/>
</dbReference>
<dbReference type="SMR" id="B1LMZ9"/>
<dbReference type="KEGG" id="ecm:EcSMS35_0874"/>
<dbReference type="HOGENOM" id="CLU_035023_2_2_6"/>
<dbReference type="Proteomes" id="UP000007011">
    <property type="component" value="Chromosome"/>
</dbReference>
<dbReference type="GO" id="GO:0005886">
    <property type="term" value="C:plasma membrane"/>
    <property type="evidence" value="ECO:0007669"/>
    <property type="project" value="UniProtKB-SubCell"/>
</dbReference>
<dbReference type="GO" id="GO:0008324">
    <property type="term" value="F:monoatomic cation transmembrane transporter activity"/>
    <property type="evidence" value="ECO:0007669"/>
    <property type="project" value="InterPro"/>
</dbReference>
<dbReference type="GO" id="GO:0006813">
    <property type="term" value="P:potassium ion transport"/>
    <property type="evidence" value="ECO:0007669"/>
    <property type="project" value="InterPro"/>
</dbReference>
<dbReference type="FunFam" id="3.30.70.1450:FF:000003">
    <property type="entry name" value="Putative transport protein YbjL"/>
    <property type="match status" value="1"/>
</dbReference>
<dbReference type="Gene3D" id="3.30.70.1450">
    <property type="entry name" value="Regulator of K+ conductance, C-terminal domain"/>
    <property type="match status" value="2"/>
</dbReference>
<dbReference type="HAMAP" id="MF_01015">
    <property type="entry name" value="YbjL"/>
    <property type="match status" value="1"/>
</dbReference>
<dbReference type="InterPro" id="IPR050144">
    <property type="entry name" value="AAE_transporter"/>
</dbReference>
<dbReference type="InterPro" id="IPR006037">
    <property type="entry name" value="RCK_C"/>
</dbReference>
<dbReference type="InterPro" id="IPR036721">
    <property type="entry name" value="RCK_C_sf"/>
</dbReference>
<dbReference type="InterPro" id="IPR023017">
    <property type="entry name" value="Transp_YbjL_put"/>
</dbReference>
<dbReference type="InterPro" id="IPR006512">
    <property type="entry name" value="YidE_YbjL"/>
</dbReference>
<dbReference type="NCBIfam" id="NF003440">
    <property type="entry name" value="PRK04972.1"/>
    <property type="match status" value="1"/>
</dbReference>
<dbReference type="NCBIfam" id="TIGR01625">
    <property type="entry name" value="YidE_YbjL_dupl"/>
    <property type="match status" value="2"/>
</dbReference>
<dbReference type="PANTHER" id="PTHR30445">
    <property type="entry name" value="K(+)_H(+) ANTIPORTER SUBUNIT KHTT"/>
    <property type="match status" value="1"/>
</dbReference>
<dbReference type="PANTHER" id="PTHR30445:SF10">
    <property type="entry name" value="TRANSPORT PROTEIN YBJL-RELATED"/>
    <property type="match status" value="1"/>
</dbReference>
<dbReference type="Pfam" id="PF06826">
    <property type="entry name" value="Asp-Al_Ex"/>
    <property type="match status" value="2"/>
</dbReference>
<dbReference type="Pfam" id="PF02080">
    <property type="entry name" value="TrkA_C"/>
    <property type="match status" value="2"/>
</dbReference>
<dbReference type="SUPFAM" id="SSF116726">
    <property type="entry name" value="TrkA C-terminal domain-like"/>
    <property type="match status" value="2"/>
</dbReference>
<dbReference type="PROSITE" id="PS51202">
    <property type="entry name" value="RCK_C"/>
    <property type="match status" value="2"/>
</dbReference>
<organism>
    <name type="scientific">Escherichia coli (strain SMS-3-5 / SECEC)</name>
    <dbReference type="NCBI Taxonomy" id="439855"/>
    <lineage>
        <taxon>Bacteria</taxon>
        <taxon>Pseudomonadati</taxon>
        <taxon>Pseudomonadota</taxon>
        <taxon>Gammaproteobacteria</taxon>
        <taxon>Enterobacterales</taxon>
        <taxon>Enterobacteriaceae</taxon>
        <taxon>Escherichia</taxon>
    </lineage>
</organism>
<keyword id="KW-1003">Cell membrane</keyword>
<keyword id="KW-0472">Membrane</keyword>
<keyword id="KW-0677">Repeat</keyword>
<keyword id="KW-0812">Transmembrane</keyword>
<keyword id="KW-1133">Transmembrane helix</keyword>
<keyword id="KW-0813">Transport</keyword>
<reference key="1">
    <citation type="journal article" date="2008" name="J. Bacteriol.">
        <title>Insights into the environmental resistance gene pool from the genome sequence of the multidrug-resistant environmental isolate Escherichia coli SMS-3-5.</title>
        <authorList>
            <person name="Fricke W.F."/>
            <person name="Wright M.S."/>
            <person name="Lindell A.H."/>
            <person name="Harkins D.M."/>
            <person name="Baker-Austin C."/>
            <person name="Ravel J."/>
            <person name="Stepanauskas R."/>
        </authorList>
    </citation>
    <scope>NUCLEOTIDE SEQUENCE [LARGE SCALE GENOMIC DNA]</scope>
    <source>
        <strain>SMS-3-5 / SECEC</strain>
    </source>
</reference>
<sequence>MNINVAELLNGNYILLLFVVLALGLCLGKLRLGSIQLGNSIGVLVVSLLLGQQHFSINTDALNLGFMLFIFCVGVEAGPNFFSIFFRDGKNYLMLALVMVGSALVIALGLGKLFGWDIGLTAGMLAGSMTSTPVLVGAGDTLRHSGMESRQLSLALDNLSLGYALTYLIGLVSLIVGARYLPKLQHQDLQTSAQQIARERGLDTDANRKVYLPVIRAYRVGPELVAWTDGKNLRELGIYRQTGCYIERIRRNGILANPDGDAVLQMGDEIALVGYPDAHARLDPSFRNGKEVFDRDLLDMRIVTEEVVVKNHNAVGKRLAQLKLTDHGCFLNRVIRSQIEMPIDDNVVLNKGDVLQVSGDARRVKTIADRIGFISIHSQVTDLLAFCAFFVIGLMIGMITFQFSTFSFGMGNAAGLLFAGIMLGFMRANHPTFGYIPQGALSMVKEFGLMVFMAGVGLSAGSGINNGLGAIGGQMLIAGLIVSLVPVVICFLFGAYVLRMNRALLFGAMMGARTCAPAMEIISDTARSNIPALGYAGTYAIANVLLTLAGTIIVMVWPGLG</sequence>
<gene>
    <name evidence="1" type="primary">ybjL</name>
    <name type="ordered locus">EcSMS35_0874</name>
</gene>
<comment type="subcellular location">
    <subcellularLocation>
        <location evidence="1">Cell membrane</location>
        <topology evidence="1">Multi-pass membrane protein</topology>
    </subcellularLocation>
</comment>
<comment type="similarity">
    <text evidence="1">Belongs to the AAE transporter (TC 2.A.81) family. YbjL subfamily.</text>
</comment>